<accession>Q2SJB7</accession>
<comment type="function">
    <text evidence="1">Multifunctional enzyme that catalyzes the SAM-dependent methylations of uroporphyrinogen III at position C-2 and C-7 to form precorrin-2 via precorrin-1. Then it catalyzes the NAD-dependent ring dehydrogenation of precorrin-2 to yield sirohydrochlorin. Finally, it catalyzes the ferrochelation of sirohydrochlorin to yield siroheme.</text>
</comment>
<comment type="catalytic activity">
    <reaction evidence="1">
        <text>uroporphyrinogen III + 2 S-adenosyl-L-methionine = precorrin-2 + 2 S-adenosyl-L-homocysteine + H(+)</text>
        <dbReference type="Rhea" id="RHEA:32459"/>
        <dbReference type="ChEBI" id="CHEBI:15378"/>
        <dbReference type="ChEBI" id="CHEBI:57308"/>
        <dbReference type="ChEBI" id="CHEBI:57856"/>
        <dbReference type="ChEBI" id="CHEBI:58827"/>
        <dbReference type="ChEBI" id="CHEBI:59789"/>
        <dbReference type="EC" id="2.1.1.107"/>
    </reaction>
</comment>
<comment type="catalytic activity">
    <reaction evidence="1">
        <text>precorrin-2 + NAD(+) = sirohydrochlorin + NADH + 2 H(+)</text>
        <dbReference type="Rhea" id="RHEA:15613"/>
        <dbReference type="ChEBI" id="CHEBI:15378"/>
        <dbReference type="ChEBI" id="CHEBI:57540"/>
        <dbReference type="ChEBI" id="CHEBI:57945"/>
        <dbReference type="ChEBI" id="CHEBI:58351"/>
        <dbReference type="ChEBI" id="CHEBI:58827"/>
        <dbReference type="EC" id="1.3.1.76"/>
    </reaction>
</comment>
<comment type="catalytic activity">
    <reaction evidence="1">
        <text>siroheme + 2 H(+) = sirohydrochlorin + Fe(2+)</text>
        <dbReference type="Rhea" id="RHEA:24360"/>
        <dbReference type="ChEBI" id="CHEBI:15378"/>
        <dbReference type="ChEBI" id="CHEBI:29033"/>
        <dbReference type="ChEBI" id="CHEBI:58351"/>
        <dbReference type="ChEBI" id="CHEBI:60052"/>
        <dbReference type="EC" id="4.99.1.4"/>
    </reaction>
</comment>
<comment type="pathway">
    <text evidence="1">Cofactor biosynthesis; adenosylcobalamin biosynthesis; precorrin-2 from uroporphyrinogen III: step 1/1.</text>
</comment>
<comment type="pathway">
    <text evidence="1">Cofactor biosynthesis; adenosylcobalamin biosynthesis; sirohydrochlorin from precorrin-2: step 1/1.</text>
</comment>
<comment type="pathway">
    <text evidence="1">Porphyrin-containing compound metabolism; siroheme biosynthesis; precorrin-2 from uroporphyrinogen III: step 1/1.</text>
</comment>
<comment type="pathway">
    <text evidence="1">Porphyrin-containing compound metabolism; siroheme biosynthesis; siroheme from sirohydrochlorin: step 1/1.</text>
</comment>
<comment type="pathway">
    <text evidence="1">Porphyrin-containing compound metabolism; siroheme biosynthesis; sirohydrochlorin from precorrin-2: step 1/1.</text>
</comment>
<comment type="similarity">
    <text evidence="1">In the N-terminal section; belongs to the precorrin-2 dehydrogenase / sirohydrochlorin ferrochelatase family.</text>
</comment>
<comment type="similarity">
    <text evidence="1">In the C-terminal section; belongs to the precorrin methyltransferase family.</text>
</comment>
<organism>
    <name type="scientific">Hahella chejuensis (strain KCTC 2396)</name>
    <dbReference type="NCBI Taxonomy" id="349521"/>
    <lineage>
        <taxon>Bacteria</taxon>
        <taxon>Pseudomonadati</taxon>
        <taxon>Pseudomonadota</taxon>
        <taxon>Gammaproteobacteria</taxon>
        <taxon>Oceanospirillales</taxon>
        <taxon>Hahellaceae</taxon>
        <taxon>Hahella</taxon>
    </lineage>
</organism>
<sequence length="469" mass="51442">MSTQLQTWDFLPISMNLQGRECLVVGDTEQAVRKTDLLLRAGAKVRLLGDPHAKALKESADALNAITVIPDPFHPDLLQLCAVVVAASDSAMLNQQVAQAAQARGIPVNVVEQPELSSFIFPSIIDRHPVLVSVTSSGGAPVLTRLLRNRLESLIPHGFGRLADLAMEFRDKVRSRFGHINQRRRFWESVLEGVVSDLVFCGRTDKARAMLDDMLSGEQADAIKDTGEVYLVGAGPGDPDLLTFRALRLMRQADVVLYDRLVSPQILDLVRRDAKRINVGKARSNHTLPQQEINAMLVELAKEGKRVLRLKGGDPFIFGRGGEEIDQLADAGVPFQVVPGITAASGCAAYSGIPLTHRDHSQSVRFVTGHLKSDTCDLPWHEFVQDNQTLVFYMGLVGLPIISRELIAHGMKPSTPIALVSRGTLPDQQVLVGELGNIAKKVEEQQIPGPTIIIIGDVVTLRDRLRWMD</sequence>
<feature type="chain" id="PRO_0000330515" description="Siroheme synthase">
    <location>
        <begin position="1"/>
        <end position="469"/>
    </location>
</feature>
<feature type="region of interest" description="Precorrin-2 dehydrogenase /sirohydrochlorin ferrochelatase" evidence="1">
    <location>
        <begin position="1"/>
        <end position="211"/>
    </location>
</feature>
<feature type="region of interest" description="Uroporphyrinogen-III C-methyltransferase" evidence="1">
    <location>
        <begin position="227"/>
        <end position="469"/>
    </location>
</feature>
<feature type="active site" description="Proton acceptor" evidence="1">
    <location>
        <position position="259"/>
    </location>
</feature>
<feature type="active site" description="Proton donor" evidence="1">
    <location>
        <position position="281"/>
    </location>
</feature>
<feature type="binding site" evidence="1">
    <location>
        <begin position="29"/>
        <end position="30"/>
    </location>
    <ligand>
        <name>NAD(+)</name>
        <dbReference type="ChEBI" id="CHEBI:57540"/>
    </ligand>
</feature>
<feature type="binding site" evidence="1">
    <location>
        <begin position="50"/>
        <end position="51"/>
    </location>
    <ligand>
        <name>NAD(+)</name>
        <dbReference type="ChEBI" id="CHEBI:57540"/>
    </ligand>
</feature>
<feature type="binding site" evidence="1">
    <location>
        <position position="236"/>
    </location>
    <ligand>
        <name>S-adenosyl-L-methionine</name>
        <dbReference type="ChEBI" id="CHEBI:59789"/>
    </ligand>
</feature>
<feature type="binding site" evidence="1">
    <location>
        <begin position="312"/>
        <end position="314"/>
    </location>
    <ligand>
        <name>S-adenosyl-L-methionine</name>
        <dbReference type="ChEBI" id="CHEBI:59789"/>
    </ligand>
</feature>
<feature type="binding site" evidence="1">
    <location>
        <position position="317"/>
    </location>
    <ligand>
        <name>S-adenosyl-L-methionine</name>
        <dbReference type="ChEBI" id="CHEBI:59789"/>
    </ligand>
</feature>
<feature type="binding site" evidence="1">
    <location>
        <begin position="342"/>
        <end position="343"/>
    </location>
    <ligand>
        <name>S-adenosyl-L-methionine</name>
        <dbReference type="ChEBI" id="CHEBI:59789"/>
    </ligand>
</feature>
<feature type="binding site" evidence="1">
    <location>
        <position position="394"/>
    </location>
    <ligand>
        <name>S-adenosyl-L-methionine</name>
        <dbReference type="ChEBI" id="CHEBI:59789"/>
    </ligand>
</feature>
<feature type="binding site" evidence="1">
    <location>
        <position position="423"/>
    </location>
    <ligand>
        <name>S-adenosyl-L-methionine</name>
        <dbReference type="ChEBI" id="CHEBI:59789"/>
    </ligand>
</feature>
<feature type="modified residue" description="Phosphoserine" evidence="1">
    <location>
        <position position="136"/>
    </location>
</feature>
<reference key="1">
    <citation type="journal article" date="2005" name="Nucleic Acids Res.">
        <title>Genomic blueprint of Hahella chejuensis, a marine microbe producing an algicidal agent.</title>
        <authorList>
            <person name="Jeong H."/>
            <person name="Yim J.H."/>
            <person name="Lee C."/>
            <person name="Choi S.-H."/>
            <person name="Park Y.K."/>
            <person name="Yoon S.H."/>
            <person name="Hur C.-G."/>
            <person name="Kang H.-Y."/>
            <person name="Kim D."/>
            <person name="Lee H.H."/>
            <person name="Park K.H."/>
            <person name="Park S.-H."/>
            <person name="Park H.-S."/>
            <person name="Lee H.K."/>
            <person name="Oh T.K."/>
            <person name="Kim J.F."/>
        </authorList>
    </citation>
    <scope>NUCLEOTIDE SEQUENCE [LARGE SCALE GENOMIC DNA]</scope>
    <source>
        <strain>KCTC 2396</strain>
    </source>
</reference>
<gene>
    <name evidence="1" type="primary">cysG</name>
    <name type="ordered locus">HCH_02450</name>
</gene>
<name>CYSG_HAHCH</name>
<protein>
    <recommendedName>
        <fullName evidence="1">Siroheme synthase</fullName>
    </recommendedName>
    <domain>
        <recommendedName>
            <fullName evidence="1">Uroporphyrinogen-III C-methyltransferase</fullName>
            <shortName evidence="1">Urogen III methylase</shortName>
            <ecNumber evidence="1">2.1.1.107</ecNumber>
        </recommendedName>
        <alternativeName>
            <fullName evidence="1">SUMT</fullName>
        </alternativeName>
        <alternativeName>
            <fullName evidence="1">Uroporphyrinogen III methylase</fullName>
            <shortName evidence="1">UROM</shortName>
        </alternativeName>
    </domain>
    <domain>
        <recommendedName>
            <fullName evidence="1">Precorrin-2 dehydrogenase</fullName>
            <ecNumber evidence="1">1.3.1.76</ecNumber>
        </recommendedName>
    </domain>
    <domain>
        <recommendedName>
            <fullName evidence="1">Sirohydrochlorin ferrochelatase</fullName>
            <ecNumber evidence="1">4.99.1.4</ecNumber>
        </recommendedName>
    </domain>
</protein>
<evidence type="ECO:0000255" key="1">
    <source>
        <dbReference type="HAMAP-Rule" id="MF_01646"/>
    </source>
</evidence>
<dbReference type="EC" id="2.1.1.107" evidence="1"/>
<dbReference type="EC" id="1.3.1.76" evidence="1"/>
<dbReference type="EC" id="4.99.1.4" evidence="1"/>
<dbReference type="EMBL" id="CP000155">
    <property type="protein sequence ID" value="ABC29257.1"/>
    <property type="molecule type" value="Genomic_DNA"/>
</dbReference>
<dbReference type="RefSeq" id="WP_011396326.1">
    <property type="nucleotide sequence ID" value="NC_007645.1"/>
</dbReference>
<dbReference type="SMR" id="Q2SJB7"/>
<dbReference type="STRING" id="349521.HCH_02450"/>
<dbReference type="KEGG" id="hch:HCH_02450"/>
<dbReference type="eggNOG" id="COG0007">
    <property type="taxonomic scope" value="Bacteria"/>
</dbReference>
<dbReference type="eggNOG" id="COG1648">
    <property type="taxonomic scope" value="Bacteria"/>
</dbReference>
<dbReference type="HOGENOM" id="CLU_011276_2_2_6"/>
<dbReference type="OrthoDB" id="9815856at2"/>
<dbReference type="UniPathway" id="UPA00148">
    <property type="reaction ID" value="UER00211"/>
</dbReference>
<dbReference type="UniPathway" id="UPA00148">
    <property type="reaction ID" value="UER00222"/>
</dbReference>
<dbReference type="UniPathway" id="UPA00262">
    <property type="reaction ID" value="UER00211"/>
</dbReference>
<dbReference type="UniPathway" id="UPA00262">
    <property type="reaction ID" value="UER00222"/>
</dbReference>
<dbReference type="UniPathway" id="UPA00262">
    <property type="reaction ID" value="UER00376"/>
</dbReference>
<dbReference type="Proteomes" id="UP000000238">
    <property type="component" value="Chromosome"/>
</dbReference>
<dbReference type="GO" id="GO:0051287">
    <property type="term" value="F:NAD binding"/>
    <property type="evidence" value="ECO:0007669"/>
    <property type="project" value="InterPro"/>
</dbReference>
<dbReference type="GO" id="GO:0043115">
    <property type="term" value="F:precorrin-2 dehydrogenase activity"/>
    <property type="evidence" value="ECO:0007669"/>
    <property type="project" value="UniProtKB-UniRule"/>
</dbReference>
<dbReference type="GO" id="GO:0051266">
    <property type="term" value="F:sirohydrochlorin ferrochelatase activity"/>
    <property type="evidence" value="ECO:0007669"/>
    <property type="project" value="UniProtKB-EC"/>
</dbReference>
<dbReference type="GO" id="GO:0004851">
    <property type="term" value="F:uroporphyrin-III C-methyltransferase activity"/>
    <property type="evidence" value="ECO:0007669"/>
    <property type="project" value="UniProtKB-UniRule"/>
</dbReference>
<dbReference type="GO" id="GO:0009236">
    <property type="term" value="P:cobalamin biosynthetic process"/>
    <property type="evidence" value="ECO:0007669"/>
    <property type="project" value="UniProtKB-UniRule"/>
</dbReference>
<dbReference type="GO" id="GO:0032259">
    <property type="term" value="P:methylation"/>
    <property type="evidence" value="ECO:0007669"/>
    <property type="project" value="UniProtKB-KW"/>
</dbReference>
<dbReference type="GO" id="GO:0019354">
    <property type="term" value="P:siroheme biosynthetic process"/>
    <property type="evidence" value="ECO:0007669"/>
    <property type="project" value="UniProtKB-UniRule"/>
</dbReference>
<dbReference type="CDD" id="cd11642">
    <property type="entry name" value="SUMT"/>
    <property type="match status" value="1"/>
</dbReference>
<dbReference type="FunFam" id="3.30.950.10:FF:000001">
    <property type="entry name" value="Siroheme synthase"/>
    <property type="match status" value="1"/>
</dbReference>
<dbReference type="FunFam" id="3.40.1010.10:FF:000001">
    <property type="entry name" value="Siroheme synthase"/>
    <property type="match status" value="1"/>
</dbReference>
<dbReference type="Gene3D" id="3.40.1010.10">
    <property type="entry name" value="Cobalt-precorrin-4 Transmethylase, Domain 1"/>
    <property type="match status" value="1"/>
</dbReference>
<dbReference type="Gene3D" id="3.30.950.10">
    <property type="entry name" value="Methyltransferase, Cobalt-precorrin-4 Transmethylase, Domain 2"/>
    <property type="match status" value="1"/>
</dbReference>
<dbReference type="Gene3D" id="3.40.50.720">
    <property type="entry name" value="NAD(P)-binding Rossmann-like Domain"/>
    <property type="match status" value="1"/>
</dbReference>
<dbReference type="Gene3D" id="1.10.8.210">
    <property type="entry name" value="Sirohaem synthase, dimerisation domain"/>
    <property type="match status" value="1"/>
</dbReference>
<dbReference type="Gene3D" id="3.30.160.110">
    <property type="entry name" value="Siroheme synthase, domain 2"/>
    <property type="match status" value="1"/>
</dbReference>
<dbReference type="HAMAP" id="MF_01646">
    <property type="entry name" value="Siroheme_synth"/>
    <property type="match status" value="1"/>
</dbReference>
<dbReference type="InterPro" id="IPR000878">
    <property type="entry name" value="4pyrrol_Mease"/>
</dbReference>
<dbReference type="InterPro" id="IPR035996">
    <property type="entry name" value="4pyrrol_Methylase_sf"/>
</dbReference>
<dbReference type="InterPro" id="IPR014777">
    <property type="entry name" value="4pyrrole_Mease_sub1"/>
</dbReference>
<dbReference type="InterPro" id="IPR014776">
    <property type="entry name" value="4pyrrole_Mease_sub2"/>
</dbReference>
<dbReference type="InterPro" id="IPR006366">
    <property type="entry name" value="CobA/CysG_C"/>
</dbReference>
<dbReference type="InterPro" id="IPR036291">
    <property type="entry name" value="NAD(P)-bd_dom_sf"/>
</dbReference>
<dbReference type="InterPro" id="IPR050161">
    <property type="entry name" value="Siro_Cobalamin_biosynth"/>
</dbReference>
<dbReference type="InterPro" id="IPR037115">
    <property type="entry name" value="Sirohaem_synt_dimer_dom_sf"/>
</dbReference>
<dbReference type="InterPro" id="IPR012409">
    <property type="entry name" value="Sirohaem_synth"/>
</dbReference>
<dbReference type="InterPro" id="IPR019478">
    <property type="entry name" value="Sirohaem_synthase_dimer_dom"/>
</dbReference>
<dbReference type="InterPro" id="IPR006367">
    <property type="entry name" value="Sirohaem_synthase_N"/>
</dbReference>
<dbReference type="InterPro" id="IPR003043">
    <property type="entry name" value="Uropor_MeTrfase_CS"/>
</dbReference>
<dbReference type="NCBIfam" id="TIGR01469">
    <property type="entry name" value="cobA_cysG_Cterm"/>
    <property type="match status" value="1"/>
</dbReference>
<dbReference type="NCBIfam" id="TIGR01470">
    <property type="entry name" value="cysG_Nterm"/>
    <property type="match status" value="1"/>
</dbReference>
<dbReference type="NCBIfam" id="NF004790">
    <property type="entry name" value="PRK06136.1"/>
    <property type="match status" value="1"/>
</dbReference>
<dbReference type="NCBIfam" id="NF007922">
    <property type="entry name" value="PRK10637.1"/>
    <property type="match status" value="1"/>
</dbReference>
<dbReference type="PANTHER" id="PTHR45790:SF1">
    <property type="entry name" value="SIROHEME SYNTHASE"/>
    <property type="match status" value="1"/>
</dbReference>
<dbReference type="PANTHER" id="PTHR45790">
    <property type="entry name" value="SIROHEME SYNTHASE-RELATED"/>
    <property type="match status" value="1"/>
</dbReference>
<dbReference type="Pfam" id="PF10414">
    <property type="entry name" value="CysG_dimeriser"/>
    <property type="match status" value="1"/>
</dbReference>
<dbReference type="Pfam" id="PF13241">
    <property type="entry name" value="NAD_binding_7"/>
    <property type="match status" value="1"/>
</dbReference>
<dbReference type="Pfam" id="PF00590">
    <property type="entry name" value="TP_methylase"/>
    <property type="match status" value="1"/>
</dbReference>
<dbReference type="PIRSF" id="PIRSF036426">
    <property type="entry name" value="Sirohaem_synth"/>
    <property type="match status" value="1"/>
</dbReference>
<dbReference type="SUPFAM" id="SSF51735">
    <property type="entry name" value="NAD(P)-binding Rossmann-fold domains"/>
    <property type="match status" value="1"/>
</dbReference>
<dbReference type="SUPFAM" id="SSF75615">
    <property type="entry name" value="Siroheme synthase middle domains-like"/>
    <property type="match status" value="1"/>
</dbReference>
<dbReference type="SUPFAM" id="SSF53790">
    <property type="entry name" value="Tetrapyrrole methylase"/>
    <property type="match status" value="1"/>
</dbReference>
<dbReference type="PROSITE" id="PS00840">
    <property type="entry name" value="SUMT_2"/>
    <property type="match status" value="1"/>
</dbReference>
<proteinExistence type="inferred from homology"/>
<keyword id="KW-0169">Cobalamin biosynthesis</keyword>
<keyword id="KW-0456">Lyase</keyword>
<keyword id="KW-0489">Methyltransferase</keyword>
<keyword id="KW-0511">Multifunctional enzyme</keyword>
<keyword id="KW-0520">NAD</keyword>
<keyword id="KW-0560">Oxidoreductase</keyword>
<keyword id="KW-0597">Phosphoprotein</keyword>
<keyword id="KW-0627">Porphyrin biosynthesis</keyword>
<keyword id="KW-1185">Reference proteome</keyword>
<keyword id="KW-0949">S-adenosyl-L-methionine</keyword>
<keyword id="KW-0808">Transferase</keyword>